<name>RPOS_ECOLI</name>
<accession>P13445</accession>
<accession>Q2MA88</accession>
<accession>Q79EB7</accession>
<organism>
    <name type="scientific">Escherichia coli (strain K12)</name>
    <dbReference type="NCBI Taxonomy" id="83333"/>
    <lineage>
        <taxon>Bacteria</taxon>
        <taxon>Pseudomonadati</taxon>
        <taxon>Pseudomonadota</taxon>
        <taxon>Gammaproteobacteria</taxon>
        <taxon>Enterobacterales</taxon>
        <taxon>Enterobacteriaceae</taxon>
        <taxon>Escherichia</taxon>
    </lineage>
</organism>
<evidence type="ECO:0000250" key="1"/>
<evidence type="ECO:0000255" key="2">
    <source>
        <dbReference type="HAMAP-Rule" id="MF_00959"/>
    </source>
</evidence>
<evidence type="ECO:0000269" key="3">
    <source>
    </source>
</evidence>
<evidence type="ECO:0000269" key="4">
    <source>
    </source>
</evidence>
<evidence type="ECO:0000269" key="5">
    <source>
    </source>
</evidence>
<evidence type="ECO:0000269" key="6">
    <source>
    </source>
</evidence>
<evidence type="ECO:0000269" key="7">
    <source>
    </source>
</evidence>
<evidence type="ECO:0000269" key="8">
    <source>
    </source>
</evidence>
<evidence type="ECO:0000269" key="9">
    <source>
    </source>
</evidence>
<evidence type="ECO:0000269" key="10">
    <source>
    </source>
</evidence>
<evidence type="ECO:0000269" key="11">
    <source>
    </source>
</evidence>
<evidence type="ECO:0000269" key="12">
    <source>
    </source>
</evidence>
<evidence type="ECO:0000269" key="13">
    <source>
    </source>
</evidence>
<evidence type="ECO:0000305" key="14"/>
<evidence type="ECO:0007829" key="15">
    <source>
        <dbReference type="PDB" id="6FI7"/>
    </source>
</evidence>
<proteinExistence type="evidence at protein level"/>
<keyword id="KW-0002">3D-structure</keyword>
<keyword id="KW-0963">Cytoplasm</keyword>
<keyword id="KW-0238">DNA-binding</keyword>
<keyword id="KW-1185">Reference proteome</keyword>
<keyword id="KW-0731">Sigma factor</keyword>
<keyword id="KW-0346">Stress response</keyword>
<keyword id="KW-0804">Transcription</keyword>
<keyword id="KW-0805">Transcription regulation</keyword>
<gene>
    <name evidence="2" type="primary">rpoS</name>
    <name type="synonym">appR</name>
    <name type="synonym">katF</name>
    <name type="synonym">nur</name>
    <name type="synonym">otsX</name>
    <name type="synonym">sigS</name>
    <name type="ordered locus">b2741</name>
    <name type="ordered locus">JW5437</name>
</gene>
<dbReference type="EMBL" id="X16400">
    <property type="protein sequence ID" value="CAA34435.1"/>
    <property type="status" value="ALT_INIT"/>
    <property type="molecule type" value="Genomic_DNA"/>
</dbReference>
<dbReference type="EMBL" id="D13548">
    <property type="protein sequence ID" value="BAA02747.1"/>
    <property type="molecule type" value="Genomic_DNA"/>
</dbReference>
<dbReference type="EMBL" id="Z14969">
    <property type="protein sequence ID" value="CAA78692.1"/>
    <property type="status" value="ALT_INIT"/>
    <property type="molecule type" value="Genomic_DNA"/>
</dbReference>
<dbReference type="EMBL" id="U29579">
    <property type="protein sequence ID" value="AAA69251.1"/>
    <property type="molecule type" value="Genomic_DNA"/>
</dbReference>
<dbReference type="EMBL" id="U00096">
    <property type="protein sequence ID" value="AAC75783.1"/>
    <property type="molecule type" value="Genomic_DNA"/>
</dbReference>
<dbReference type="EMBL" id="AP009048">
    <property type="protein sequence ID" value="BAE76818.1"/>
    <property type="status" value="ALT_SEQ"/>
    <property type="molecule type" value="Genomic_DNA"/>
</dbReference>
<dbReference type="EMBL" id="D17549">
    <property type="protein sequence ID" value="BAA21003.1"/>
    <property type="molecule type" value="Genomic_DNA"/>
</dbReference>
<dbReference type="EMBL" id="L07869">
    <property type="protein sequence ID" value="AAA17876.1"/>
    <property type="molecule type" value="Unassigned_DNA"/>
</dbReference>
<dbReference type="PIR" id="A65055">
    <property type="entry name" value="RNECKF"/>
</dbReference>
<dbReference type="RefSeq" id="NP_417221.1">
    <property type="nucleotide sequence ID" value="NC_000913.3"/>
</dbReference>
<dbReference type="RefSeq" id="WP_000081588.1">
    <property type="nucleotide sequence ID" value="NZ_CP010438.1"/>
</dbReference>
<dbReference type="PDB" id="5IPL">
    <property type="method" value="X-ray"/>
    <property type="resolution" value="3.60 A"/>
    <property type="chains" value="F=1-328"/>
</dbReference>
<dbReference type="PDB" id="5IPM">
    <property type="method" value="X-ray"/>
    <property type="resolution" value="4.20 A"/>
    <property type="chains" value="F=1-328"/>
</dbReference>
<dbReference type="PDB" id="5IPN">
    <property type="method" value="X-ray"/>
    <property type="resolution" value="4.61 A"/>
    <property type="chains" value="F=1-328"/>
</dbReference>
<dbReference type="PDB" id="6FI7">
    <property type="method" value="NMR"/>
    <property type="chains" value="A=245-330"/>
</dbReference>
<dbReference type="PDB" id="6IDO">
    <property type="method" value="X-ray"/>
    <property type="resolution" value="3.75 A"/>
    <property type="chains" value="A/B=256-330"/>
</dbReference>
<dbReference type="PDB" id="6KJ6">
    <property type="method" value="EM"/>
    <property type="resolution" value="3.80 A"/>
    <property type="chains" value="F=1-330"/>
</dbReference>
<dbReference type="PDB" id="6UTV">
    <property type="method" value="X-ray"/>
    <property type="resolution" value="3.45 A"/>
    <property type="chains" value="FFF=1-328"/>
</dbReference>
<dbReference type="PDB" id="6UTW">
    <property type="method" value="X-ray"/>
    <property type="resolution" value="3.85 A"/>
    <property type="chains" value="FFF=1-328"/>
</dbReference>
<dbReference type="PDB" id="6UTX">
    <property type="method" value="X-ray"/>
    <property type="resolution" value="4.05 A"/>
    <property type="chains" value="FFF=1-328"/>
</dbReference>
<dbReference type="PDB" id="6UTY">
    <property type="method" value="X-ray"/>
    <property type="resolution" value="4.15 A"/>
    <property type="chains" value="FFF=1-328"/>
</dbReference>
<dbReference type="PDB" id="6UTZ">
    <property type="method" value="X-ray"/>
    <property type="resolution" value="3.80 A"/>
    <property type="chains" value="FFF=1-328"/>
</dbReference>
<dbReference type="PDB" id="6UU0">
    <property type="method" value="X-ray"/>
    <property type="resolution" value="3.90 A"/>
    <property type="chains" value="FFF=1-328"/>
</dbReference>
<dbReference type="PDB" id="6UU1">
    <property type="method" value="X-ray"/>
    <property type="resolution" value="4.10 A"/>
    <property type="chains" value="FFF=1-328"/>
</dbReference>
<dbReference type="PDB" id="6UU2">
    <property type="method" value="X-ray"/>
    <property type="resolution" value="4.40 A"/>
    <property type="chains" value="FFF=1-328"/>
</dbReference>
<dbReference type="PDB" id="6UU3">
    <property type="method" value="X-ray"/>
    <property type="resolution" value="4.00 A"/>
    <property type="chains" value="FFF=1-328"/>
</dbReference>
<dbReference type="PDB" id="6UU4">
    <property type="method" value="X-ray"/>
    <property type="resolution" value="4.30 A"/>
    <property type="chains" value="FFF=1-328"/>
</dbReference>
<dbReference type="PDB" id="6UU5">
    <property type="method" value="X-ray"/>
    <property type="resolution" value="5.40 A"/>
    <property type="chains" value="FFF=1-328"/>
</dbReference>
<dbReference type="PDB" id="6UU6">
    <property type="method" value="X-ray"/>
    <property type="resolution" value="4.20 A"/>
    <property type="chains" value="FFF=1-328"/>
</dbReference>
<dbReference type="PDB" id="6UU7">
    <property type="method" value="X-ray"/>
    <property type="resolution" value="4.40 A"/>
    <property type="chains" value="FFF=1-328"/>
</dbReference>
<dbReference type="PDB" id="6UU8">
    <property type="method" value="X-ray"/>
    <property type="resolution" value="4.40 A"/>
    <property type="chains" value="FFF=1-328"/>
</dbReference>
<dbReference type="PDB" id="6UU9">
    <property type="method" value="X-ray"/>
    <property type="resolution" value="5.40 A"/>
    <property type="chains" value="FFF=1-328"/>
</dbReference>
<dbReference type="PDB" id="6UUA">
    <property type="method" value="X-ray"/>
    <property type="resolution" value="4.00 A"/>
    <property type="chains" value="FFF=1-328"/>
</dbReference>
<dbReference type="PDB" id="6UUB">
    <property type="method" value="X-ray"/>
    <property type="resolution" value="3.96 A"/>
    <property type="chains" value="FFF=1-328"/>
</dbReference>
<dbReference type="PDB" id="6UUC">
    <property type="method" value="X-ray"/>
    <property type="resolution" value="4.10 A"/>
    <property type="chains" value="FFF=1-328"/>
</dbReference>
<dbReference type="PDBsum" id="5IPL"/>
<dbReference type="PDBsum" id="5IPM"/>
<dbReference type="PDBsum" id="5IPN"/>
<dbReference type="PDBsum" id="6FI7"/>
<dbReference type="PDBsum" id="6IDO"/>
<dbReference type="PDBsum" id="6KJ6"/>
<dbReference type="PDBsum" id="6UTV"/>
<dbReference type="PDBsum" id="6UTW"/>
<dbReference type="PDBsum" id="6UTX"/>
<dbReference type="PDBsum" id="6UTY"/>
<dbReference type="PDBsum" id="6UTZ"/>
<dbReference type="PDBsum" id="6UU0"/>
<dbReference type="PDBsum" id="6UU1"/>
<dbReference type="PDBsum" id="6UU2"/>
<dbReference type="PDBsum" id="6UU3"/>
<dbReference type="PDBsum" id="6UU4"/>
<dbReference type="PDBsum" id="6UU5"/>
<dbReference type="PDBsum" id="6UU6"/>
<dbReference type="PDBsum" id="6UU7"/>
<dbReference type="PDBsum" id="6UU8"/>
<dbReference type="PDBsum" id="6UU9"/>
<dbReference type="PDBsum" id="6UUA"/>
<dbReference type="PDBsum" id="6UUB"/>
<dbReference type="PDBsum" id="6UUC"/>
<dbReference type="EMDB" id="EMD-0700"/>
<dbReference type="SMR" id="P13445"/>
<dbReference type="BioGRID" id="4262274">
    <property type="interactions" value="308"/>
</dbReference>
<dbReference type="BioGRID" id="851542">
    <property type="interactions" value="1"/>
</dbReference>
<dbReference type="ComplexPortal" id="CPX-4883">
    <property type="entry name" value="DNA-directed RNA polymerase holoenzyme complex, SigmaS variant"/>
</dbReference>
<dbReference type="ComplexPortal" id="CPX-5024">
    <property type="entry name" value="rpoS-rssB sigma-antisigma complex"/>
</dbReference>
<dbReference type="DIP" id="DIP-10777N"/>
<dbReference type="FunCoup" id="P13445">
    <property type="interactions" value="334"/>
</dbReference>
<dbReference type="IntAct" id="P13445">
    <property type="interactions" value="10"/>
</dbReference>
<dbReference type="STRING" id="511145.b2741"/>
<dbReference type="jPOST" id="P13445"/>
<dbReference type="PaxDb" id="511145-b2741"/>
<dbReference type="EnsemblBacteria" id="AAC75783">
    <property type="protein sequence ID" value="AAC75783"/>
    <property type="gene ID" value="b2741"/>
</dbReference>
<dbReference type="GeneID" id="947210"/>
<dbReference type="KEGG" id="ecj:JW5437"/>
<dbReference type="KEGG" id="eco:b2741"/>
<dbReference type="KEGG" id="ecoc:C3026_15075"/>
<dbReference type="PATRIC" id="fig|511145.12.peg.2835"/>
<dbReference type="EchoBASE" id="EB0505"/>
<dbReference type="eggNOG" id="COG0568">
    <property type="taxonomic scope" value="Bacteria"/>
</dbReference>
<dbReference type="HOGENOM" id="CLU_014793_3_5_6"/>
<dbReference type="InParanoid" id="P13445"/>
<dbReference type="OMA" id="RVQREFN"/>
<dbReference type="OrthoDB" id="9809557at2"/>
<dbReference type="PhylomeDB" id="P13445"/>
<dbReference type="BioCyc" id="EcoCyc:RPOS-MONOMER"/>
<dbReference type="BioCyc" id="MetaCyc:RPOS-MONOMER"/>
<dbReference type="PHI-base" id="PHI:7256"/>
<dbReference type="PRO" id="PR:P13445"/>
<dbReference type="Proteomes" id="UP000000625">
    <property type="component" value="Chromosome"/>
</dbReference>
<dbReference type="GO" id="GO:0005737">
    <property type="term" value="C:cytoplasm"/>
    <property type="evidence" value="ECO:0000314"/>
    <property type="project" value="EcoCyc"/>
</dbReference>
<dbReference type="GO" id="GO:0000345">
    <property type="term" value="C:cytosolic DNA-directed RNA polymerase complex"/>
    <property type="evidence" value="ECO:0000250"/>
    <property type="project" value="ComplexPortal"/>
</dbReference>
<dbReference type="GO" id="GO:1903865">
    <property type="term" value="C:sigma factor antagonist complex"/>
    <property type="evidence" value="ECO:0000353"/>
    <property type="project" value="ComplexPortal"/>
</dbReference>
<dbReference type="GO" id="GO:0001000">
    <property type="term" value="F:bacterial-type RNA polymerase core enzyme binding"/>
    <property type="evidence" value="ECO:0000314"/>
    <property type="project" value="EcoCyc"/>
</dbReference>
<dbReference type="GO" id="GO:0003677">
    <property type="term" value="F:DNA binding"/>
    <property type="evidence" value="ECO:0007669"/>
    <property type="project" value="UniProtKB-UniRule"/>
</dbReference>
<dbReference type="GO" id="GO:0016987">
    <property type="term" value="F:sigma factor activity"/>
    <property type="evidence" value="ECO:0000314"/>
    <property type="project" value="EcoCyc"/>
</dbReference>
<dbReference type="GO" id="GO:0006352">
    <property type="term" value="P:DNA-templated transcription initiation"/>
    <property type="evidence" value="ECO:0000314"/>
    <property type="project" value="EcoCyc"/>
</dbReference>
<dbReference type="GO" id="GO:0045892">
    <property type="term" value="P:negative regulation of DNA-templated transcription"/>
    <property type="evidence" value="ECO:0000303"/>
    <property type="project" value="ComplexPortal"/>
</dbReference>
<dbReference type="GO" id="GO:2000142">
    <property type="term" value="P:regulation of DNA-templated transcription initiation"/>
    <property type="evidence" value="ECO:0000250"/>
    <property type="project" value="ComplexPortal"/>
</dbReference>
<dbReference type="GO" id="GO:0006950">
    <property type="term" value="P:response to stress"/>
    <property type="evidence" value="ECO:0000314"/>
    <property type="project" value="EcoCyc"/>
</dbReference>
<dbReference type="CDD" id="cd06171">
    <property type="entry name" value="Sigma70_r4"/>
    <property type="match status" value="1"/>
</dbReference>
<dbReference type="FunFam" id="1.10.10.10:FF:000044">
    <property type="entry name" value="RNA polymerase sigma factor RpoS"/>
    <property type="match status" value="1"/>
</dbReference>
<dbReference type="FunFam" id="1.10.10.10:FF:000046">
    <property type="entry name" value="RNA polymerase sigma factor RpoS"/>
    <property type="match status" value="1"/>
</dbReference>
<dbReference type="FunFam" id="1.10.601.10:FF:000001">
    <property type="entry name" value="RNA polymerase sigma factor SigA"/>
    <property type="match status" value="1"/>
</dbReference>
<dbReference type="Gene3D" id="1.10.601.10">
    <property type="entry name" value="RNA Polymerase Primary Sigma Factor"/>
    <property type="match status" value="1"/>
</dbReference>
<dbReference type="Gene3D" id="1.10.10.10">
    <property type="entry name" value="Winged helix-like DNA-binding domain superfamily/Winged helix DNA-binding domain"/>
    <property type="match status" value="2"/>
</dbReference>
<dbReference type="HAMAP" id="MF_00959">
    <property type="entry name" value="Sigma70_RpoS"/>
    <property type="match status" value="1"/>
</dbReference>
<dbReference type="InterPro" id="IPR014284">
    <property type="entry name" value="RNA_pol_sigma-70_dom"/>
</dbReference>
<dbReference type="InterPro" id="IPR000943">
    <property type="entry name" value="RNA_pol_sigma70"/>
</dbReference>
<dbReference type="InterPro" id="IPR009042">
    <property type="entry name" value="RNA_pol_sigma70_r1_2"/>
</dbReference>
<dbReference type="InterPro" id="IPR007627">
    <property type="entry name" value="RNA_pol_sigma70_r2"/>
</dbReference>
<dbReference type="InterPro" id="IPR007624">
    <property type="entry name" value="RNA_pol_sigma70_r3"/>
</dbReference>
<dbReference type="InterPro" id="IPR007630">
    <property type="entry name" value="RNA_pol_sigma70_r4"/>
</dbReference>
<dbReference type="InterPro" id="IPR013325">
    <property type="entry name" value="RNA_pol_sigma_r2"/>
</dbReference>
<dbReference type="InterPro" id="IPR013324">
    <property type="entry name" value="RNA_pol_sigma_r3/r4-like"/>
</dbReference>
<dbReference type="InterPro" id="IPR012761">
    <property type="entry name" value="RNA_pol_sigma_RpoS"/>
</dbReference>
<dbReference type="InterPro" id="IPR050239">
    <property type="entry name" value="Sigma-70_RNA_pol_init_factors"/>
</dbReference>
<dbReference type="InterPro" id="IPR036388">
    <property type="entry name" value="WH-like_DNA-bd_sf"/>
</dbReference>
<dbReference type="NCBIfam" id="NF004207">
    <property type="entry name" value="PRK05657.1"/>
    <property type="match status" value="1"/>
</dbReference>
<dbReference type="NCBIfam" id="TIGR02394">
    <property type="entry name" value="rpoS_proteo"/>
    <property type="match status" value="1"/>
</dbReference>
<dbReference type="NCBIfam" id="TIGR02937">
    <property type="entry name" value="sigma70-ECF"/>
    <property type="match status" value="1"/>
</dbReference>
<dbReference type="PANTHER" id="PTHR30603">
    <property type="entry name" value="RNA POLYMERASE SIGMA FACTOR RPO"/>
    <property type="match status" value="1"/>
</dbReference>
<dbReference type="PANTHER" id="PTHR30603:SF67">
    <property type="entry name" value="RNA POLYMERASE SIGMA FACTOR RPOS"/>
    <property type="match status" value="1"/>
</dbReference>
<dbReference type="Pfam" id="PF00140">
    <property type="entry name" value="Sigma70_r1_2"/>
    <property type="match status" value="1"/>
</dbReference>
<dbReference type="Pfam" id="PF04542">
    <property type="entry name" value="Sigma70_r2"/>
    <property type="match status" value="1"/>
</dbReference>
<dbReference type="Pfam" id="PF04539">
    <property type="entry name" value="Sigma70_r3"/>
    <property type="match status" value="1"/>
</dbReference>
<dbReference type="Pfam" id="PF04545">
    <property type="entry name" value="Sigma70_r4"/>
    <property type="match status" value="1"/>
</dbReference>
<dbReference type="PRINTS" id="PR00046">
    <property type="entry name" value="SIGMA70FCT"/>
</dbReference>
<dbReference type="SUPFAM" id="SSF88946">
    <property type="entry name" value="Sigma2 domain of RNA polymerase sigma factors"/>
    <property type="match status" value="1"/>
</dbReference>
<dbReference type="SUPFAM" id="SSF88659">
    <property type="entry name" value="Sigma3 and sigma4 domains of RNA polymerase sigma factors"/>
    <property type="match status" value="2"/>
</dbReference>
<dbReference type="PROSITE" id="PS00715">
    <property type="entry name" value="SIGMA70_1"/>
    <property type="match status" value="1"/>
</dbReference>
<dbReference type="PROSITE" id="PS00716">
    <property type="entry name" value="SIGMA70_2"/>
    <property type="match status" value="1"/>
</dbReference>
<reference key="1">
    <citation type="journal article" date="1989" name="Nucleic Acids Res.">
        <title>Nucleotide sequence of katF of Escherichia coli suggests KatF protein is a novel sigma transcription factor.</title>
        <authorList>
            <person name="Mulvey M.R."/>
            <person name="Loewen P.C."/>
        </authorList>
    </citation>
    <scope>NUCLEOTIDE SEQUENCE [GENOMIC DNA]</scope>
    <source>
        <strain>K12</strain>
    </source>
</reference>
<reference key="2">
    <citation type="journal article" date="1993" name="Proc. Natl. Acad. Sci. U.S.A.">
        <title>Heterogeneity of the principal sigma factor in Escherichia coli: the rpoS gene product, sigma 38, is a second principal sigma factor of RNA polymerase in stationary-phase Escherichia coli.</title>
        <authorList>
            <person name="Tanaka K."/>
            <person name="Takayanagi Y."/>
            <person name="Fujita N."/>
            <person name="Ishihama A."/>
            <person name="Takahashi H."/>
        </authorList>
    </citation>
    <scope>NUCLEOTIDE SEQUENCE [GENOMIC DNA]</scope>
    <scope>FUNCTION</scope>
    <scope>INDUCTION</scope>
</reference>
<reference key="3">
    <citation type="journal article" date="1992" name="Nucleic Acids Res.">
        <title>DNA base sequence variability in katF (putative sigma factor) gene of Escherichia coli.</title>
        <authorList>
            <person name="Ivanova A."/>
            <person name="Renshaw M."/>
            <person name="Guntaka R.V."/>
            <person name="Eisenstark A."/>
        </authorList>
    </citation>
    <scope>NUCLEOTIDE SEQUENCE [GENOMIC DNA]</scope>
</reference>
<reference key="4">
    <citation type="journal article" date="1997" name="Science">
        <title>The complete genome sequence of Escherichia coli K-12.</title>
        <authorList>
            <person name="Blattner F.R."/>
            <person name="Plunkett G. III"/>
            <person name="Bloch C.A."/>
            <person name="Perna N.T."/>
            <person name="Burland V."/>
            <person name="Riley M."/>
            <person name="Collado-Vides J."/>
            <person name="Glasner J.D."/>
            <person name="Rode C.K."/>
            <person name="Mayhew G.F."/>
            <person name="Gregor J."/>
            <person name="Davis N.W."/>
            <person name="Kirkpatrick H.A."/>
            <person name="Goeden M.A."/>
            <person name="Rose D.J."/>
            <person name="Mau B."/>
            <person name="Shao Y."/>
        </authorList>
    </citation>
    <scope>NUCLEOTIDE SEQUENCE [LARGE SCALE GENOMIC DNA]</scope>
    <source>
        <strain>K12 / MG1655 / ATCC 47076</strain>
    </source>
</reference>
<reference key="5">
    <citation type="journal article" date="2006" name="Mol. Syst. Biol.">
        <title>Highly accurate genome sequences of Escherichia coli K-12 strains MG1655 and W3110.</title>
        <authorList>
            <person name="Hayashi K."/>
            <person name="Morooka N."/>
            <person name="Yamamoto Y."/>
            <person name="Fujita K."/>
            <person name="Isono K."/>
            <person name="Choi S."/>
            <person name="Ohtsubo E."/>
            <person name="Baba T."/>
            <person name="Wanner B.L."/>
            <person name="Mori H."/>
            <person name="Horiuchi T."/>
        </authorList>
    </citation>
    <scope>NUCLEOTIDE SEQUENCE [LARGE SCALE GENOMIC DNA]</scope>
    <source>
        <strain>K12 / W3110 / ATCC 27325 / DSM 5911</strain>
    </source>
</reference>
<reference key="6">
    <citation type="journal article" date="1994" name="Mol. Gen. Genet.">
        <title>Structure of the 5' upstream region and the regulation of the rpoS gene of Escherichia coli.</title>
        <authorList>
            <person name="Takayanagi Y."/>
            <person name="Tanaka K."/>
            <person name="Takahashi H."/>
        </authorList>
    </citation>
    <scope>NUCLEOTIDE SEQUENCE [GENOMIC DNA] OF 1-72</scope>
    <source>
        <strain>K12 / DH1 / ATCC 33849 / DSM 4235 / NCIB 12045</strain>
    </source>
</reference>
<reference key="7">
    <citation type="journal article" date="1994" name="J. Bacteriol.">
        <title>A gene at 59 minutes on the Escherichia coli chromosome encodes a lipoprotein with unusual amino acid repeat sequences.</title>
        <authorList>
            <person name="Ichikawa J.K."/>
            <person name="Li C."/>
            <person name="Fu J.C."/>
            <person name="Clarke S."/>
        </authorList>
    </citation>
    <scope>NUCLEOTIDE SEQUENCE [GENOMIC DNA] OF 1-11</scope>
    <source>
        <strain>MP180</strain>
    </source>
</reference>
<reference key="8">
    <citation type="journal article" date="1996" name="Proc. Natl. Acad. Sci. U.S.A.">
        <title>The response regulator SprE controls the stability of RpoS.</title>
        <authorList>
            <person name="Pratt L.A."/>
            <person name="Silhavy T.J."/>
        </authorList>
    </citation>
    <scope>INDUCTION</scope>
    <source>
        <strain>K12 / MC4100 / ATCC 35695 / DSM 6574</strain>
    </source>
</reference>
<reference key="9">
    <citation type="journal article" date="1999" name="Proc. Natl. Acad. Sci. U.S.A.">
        <title>Regulation of RpoS proteolysis in Escherichia coli: the response regulator RssB is a recognition factor that interacts with the turnover element in RpoS.</title>
        <authorList>
            <person name="Becker G."/>
            <person name="Klauck E."/>
            <person name="Hengge-Aronis R."/>
        </authorList>
    </citation>
    <scope>INDUCTION</scope>
    <scope>INTERACTION WITH RSSB</scope>
    <scope>MUTAGENESIS OF LYS-173; GLU-174; VAL-177 AND TYR-178</scope>
    <source>
        <strain>K12 / MC4100 / ATCC 35695 / DSM 6574</strain>
    </source>
</reference>
<reference key="10">
    <citation type="journal article" date="2000" name="Mol. Microbiol.">
        <title>The response regulator RssB, a recognition factor for sigmaS proteolysis in Escherichia coli, can act like an anti-sigmaS factor.</title>
        <authorList>
            <person name="Becker G."/>
            <person name="Klauck E."/>
            <person name="Hengge-Aronis R."/>
        </authorList>
    </citation>
    <scope>INDUCTION</scope>
    <scope>INTERACTION WITH RSSB</scope>
    <source>
        <strain>K12 / MC4100 / ATCC 35695 / DSM 6574</strain>
    </source>
</reference>
<reference key="11">
    <citation type="journal article" date="2004" name="Mol. Genet. Genomics">
        <title>Microarray analysis of RpoS-mediated gene expression in Escherichia coli K-12.</title>
        <authorList>
            <person name="Patten C.L."/>
            <person name="Kirchhof M.G."/>
            <person name="Schertzberg M.R."/>
            <person name="Morton R.A."/>
            <person name="Schellhorn H.E."/>
        </authorList>
    </citation>
    <scope>FUNCTION</scope>
    <source>
        <strain>K12 / MG1655 / ATCC 47076</strain>
    </source>
</reference>
<reference key="12">
    <citation type="journal article" date="2005" name="J. Bacteriol.">
        <title>Genome-wide analysis of the general stress response network in Escherichia coli: sigmaS-dependent genes, promoters, and sigma factor selectivity.</title>
        <authorList>
            <person name="Weber H."/>
            <person name="Polen T."/>
            <person name="Heuveling J."/>
            <person name="Wendisch V.F."/>
            <person name="Hengge R."/>
        </authorList>
    </citation>
    <scope>FUNCTION</scope>
    <source>
        <strain>K12 / MC4100 / ATCC 35695 / DSM 6574</strain>
    </source>
</reference>
<reference key="13">
    <citation type="journal article" date="2006" name="Biotechnol. Bioeng.">
        <title>Effect of rpoS gene knockout on the metabolism of Escherichia coli during exponential growth phase and early stationary phase based on gene expressions, enzyme activities and intracellular metabolite concentrations.</title>
        <authorList>
            <person name="Rahman M."/>
            <person name="Hasan M.R."/>
            <person name="Oba T."/>
            <person name="Shimizu K."/>
        </authorList>
    </citation>
    <scope>FUNCTION</scope>
    <source>
        <strain>K12 / BW25113</strain>
    </source>
</reference>
<reference key="14">
    <citation type="journal article" date="2009" name="J. Bacteriol.">
        <title>The stationary-phase sigma factor sigma(S) is responsible for the resistance of Escherichia coli stationary-phase cells to mazEF-mediated cell death.</title>
        <authorList>
            <person name="Kolodkin-Gal I."/>
            <person name="Engelberg-Kulka H."/>
        </authorList>
    </citation>
    <scope>FUNCTION</scope>
    <scope>DISRUPTION PHENOTYPE</scope>
    <source>
        <strain>K12 / MC4100 / ATCC 35695 / DSM 6574</strain>
    </source>
</reference>
<reference key="15">
    <citation type="journal article" date="2011" name="Annu. Rev. Microbiol.">
        <title>The RpoS-mediated general stress response in Escherichia coli.</title>
        <authorList>
            <person name="Battesti A."/>
            <person name="Majdalani N."/>
            <person name="Gottesman S."/>
        </authorList>
    </citation>
    <scope>INDUCTION</scope>
    <scope>REVIEW</scope>
</reference>
<reference key="16">
    <citation type="journal article" date="2011" name="Nat. Chem. Biol.">
        <title>Antitoxin MqsA helps mediate the bacterial general stress response.</title>
        <authorList>
            <person name="Wang X."/>
            <person name="Kim Y."/>
            <person name="Hong S.H."/>
            <person name="Ma Q."/>
            <person name="Brown B.L."/>
            <person name="Pu M."/>
            <person name="Tarone A.M."/>
            <person name="Benedik M.J."/>
            <person name="Peti W."/>
            <person name="Page R."/>
            <person name="Wood T.K."/>
        </authorList>
    </citation>
    <scope>INDUCTION</scope>
    <source>
        <strain>K12 / MG1655 / ATCC 47076</strain>
    </source>
</reference>
<reference key="17">
    <citation type="journal article" date="2011" name="Nucleic Acids Res.">
        <title>In vitro transcription profiling of the sigmaS subunit of bacterial RNA polymerase: re-definition of the sigmaS regulon and identification of sigmaS-specific promoter sequence elements.</title>
        <authorList>
            <person name="Maciag A."/>
            <person name="Peano C."/>
            <person name="Pietrelli A."/>
            <person name="Egli T."/>
            <person name="De Bellis G."/>
            <person name="Landini P."/>
        </authorList>
    </citation>
    <scope>FUNCTION</scope>
    <source>
        <strain>K12 / MG1655 / ATCC 47076</strain>
    </source>
</reference>
<sequence>MSQNTLKVHDLNEDAEFDENGVEVFDEKALVEQEPSDNDLAEEELLSQGATQRVLDATQLYLGEIGYSPLLTAEEEVYFARRALRGDVASRRRMIESNLRLVVKIARRYGNRGLALLDLIEEGNLGLIRAVEKFDPERGFRFSTYATWWIRQTIERAIMNQTRTIRLPIHIVKELNVYLRTARELSHKLDHEPSAEEIAEQLDKPVDDVSRMLRLNERITSVDTPLGGDSEKALLDILADEKENGPEDTTQDDDMKQSIVKWLFELNAKQREVLARRFGLLGYEAATLEDVGREIGLTRERVRQIQVEGLRRLREILQTQGLNIEALFRE</sequence>
<protein>
    <recommendedName>
        <fullName evidence="2">RNA polymerase sigma factor RpoS</fullName>
    </recommendedName>
    <alternativeName>
        <fullName evidence="2">Sigma S</fullName>
    </alternativeName>
    <alternativeName>
        <fullName evidence="2">Sigma-38</fullName>
    </alternativeName>
</protein>
<comment type="function">
    <text evidence="2 5 6 7 9 12">Sigma factors are initiation factors that promote the attachment of RNA polymerase to specific initiation sites and are then released. This sigma factor is the master transcriptional regulator of the stationary phase and the general stress response. Controls, positively or negatively, the expression of several hundred genes, which are mainly involved in metabolism, transport, regulation and stress management.</text>
</comment>
<comment type="function">
    <text evidence="8">Protects stationary phase cells from killing induced by endoribonuclease MazF.</text>
</comment>
<comment type="subunit">
    <text evidence="2 3 4">Interacts with the RNA polymerase core enzyme and RssB.</text>
</comment>
<comment type="interaction">
    <interactant intactId="EBI-557581">
        <id>P13445</id>
    </interactant>
    <interactant intactId="EBI-544996">
        <id>P0A8V2</id>
        <label>rpoB</label>
    </interactant>
    <organismsDiffer>false</organismsDiffer>
    <experiments>5</experiments>
</comment>
<comment type="subcellular location">
    <subcellularLocation>
        <location evidence="2">Cytoplasm</location>
    </subcellularLocation>
</comment>
<comment type="induction">
    <text evidence="3 4 10 11 12 13">Subject to complex regulation at multiple levels (transcription, translation, regulation of activity and degradation). Transcription is induced during entry into stationary phase and in response to different stresses. Transcription is repressed by antitoxin MqsA (PubMed:21516113). mRNA stability is regulated by small RNA regulators and various proteins such as Hfq, CsdA, CspC and CspE. Finally, the cellular level of RpoS is regulated by proteolysis via RssB and the ClpXP protease.</text>
</comment>
<comment type="domain">
    <text evidence="1">The sigma-70 factor domain-2 mediates sequence-specific interaction with the -10 element in promoter DNA, and plays an important role in melting the double-stranded DNA and the formation of the transcription bubble. The sigma-70 factor domain-2 mediates interaction with the RNA polymerase subunits RpoB and RpoC (By similarity).</text>
</comment>
<comment type="domain">
    <text evidence="1">The sigma-70 factor domain-4 contains a helix-turn-helix (H-T-H) motif that mediates interaction with the -35 element in promoter DNA. The domain also mediates interaction with the RNA polymerase subunit RpoA (By similarity).</text>
</comment>
<comment type="disruption phenotype">
    <text evidence="8">Stationary phase cells lose resistance to killing by endoribonuclease MazF.</text>
</comment>
<comment type="similarity">
    <text evidence="2">Belongs to the sigma-70 factor family. RpoS subfamily.</text>
</comment>
<comment type="sequence caution" evidence="14">
    <conflict type="erroneous termination">
        <sequence resource="EMBL-CDS" id="BAE76818"/>
    </conflict>
    <text>Truncated C-terminus.</text>
</comment>
<comment type="sequence caution" evidence="14">
    <conflict type="erroneous initiation">
        <sequence resource="EMBL-CDS" id="CAA34435"/>
    </conflict>
    <text>Extended N-terminus.</text>
</comment>
<comment type="sequence caution" evidence="14">
    <conflict type="erroneous initiation">
        <sequence resource="EMBL-CDS" id="CAA78692"/>
    </conflict>
    <text>Extended N-terminus.</text>
</comment>
<feature type="chain" id="PRO_0000093970" description="RNA polymerase sigma factor RpoS">
    <location>
        <begin position="1"/>
        <end position="330"/>
    </location>
</feature>
<feature type="DNA-binding region" description="H-T-H motif" evidence="2">
    <location>
        <begin position="288"/>
        <end position="307"/>
    </location>
</feature>
<feature type="region of interest" description="Sigma-70 factor domain-1">
    <location>
        <begin position="56"/>
        <end position="89"/>
    </location>
</feature>
<feature type="region of interest" description="Sigma-70 factor domain-2">
    <location>
        <begin position="94"/>
        <end position="164"/>
    </location>
</feature>
<feature type="region of interest" description="Sigma-70 factor domain-3">
    <location>
        <begin position="174"/>
        <end position="249"/>
    </location>
</feature>
<feature type="region of interest" description="Sigma-70 factor domain-4">
    <location>
        <begin position="262"/>
        <end position="315"/>
    </location>
</feature>
<feature type="short sequence motif" description="Interaction with polymerase core subunit RpoC">
    <location>
        <begin position="118"/>
        <end position="121"/>
    </location>
</feature>
<feature type="mutagenesis site" description="Eliminates RpoS proteolysis. Lack of interaction with RssB." evidence="3">
    <original>K</original>
    <variation>E</variation>
    <location>
        <position position="173"/>
    </location>
</feature>
<feature type="mutagenesis site" description="2-fold increase in RpoS half-life. Does not affect interaction with RssB." evidence="3">
    <original>E</original>
    <variation>T</variation>
    <location>
        <position position="174"/>
    </location>
</feature>
<feature type="mutagenesis site" description="3-fold increase in RpoS half-life." evidence="3">
    <original>V</original>
    <variation>K</variation>
    <location>
        <position position="177"/>
    </location>
</feature>
<feature type="mutagenesis site" description="Does not affect RpoS half-life." evidence="3">
    <original>Y</original>
    <variation>L</variation>
    <location>
        <position position="178"/>
    </location>
</feature>
<feature type="sequence conflict" description="In Ref. 3; CAA78692." evidence="14" ref="3">
    <original>F</original>
    <variation>L</variation>
    <location>
        <position position="25"/>
    </location>
</feature>
<feature type="sequence conflict" description="In Ref. 1; CAA34435." evidence="14" ref="1">
    <original>A</original>
    <variation>P</variation>
    <location>
        <position position="29"/>
    </location>
</feature>
<feature type="sequence conflict" description="In Ref. 2; BAA02747 and 6; BAA21003." evidence="14" ref="2 6">
    <original>Q</original>
    <variation>L</variation>
    <location>
        <position position="33"/>
    </location>
</feature>
<feature type="sequence conflict" description="In Ref. 1; CAA34435." evidence="14" ref="1">
    <original>E</original>
    <variation>V</variation>
    <location>
        <position position="196"/>
    </location>
</feature>
<feature type="sequence conflict" description="In Ref. 1; CAA34435." evidence="14" ref="1">
    <original>FRE</original>
    <variation>LPRVSKHLSERPVSSEAGFFCAQ</variation>
    <location>
        <begin position="328"/>
        <end position="330"/>
    </location>
</feature>
<feature type="helix" evidence="15">
    <location>
        <begin position="253"/>
        <end position="255"/>
    </location>
</feature>
<feature type="helix" evidence="15">
    <location>
        <begin position="256"/>
        <end position="261"/>
    </location>
</feature>
<feature type="turn" evidence="15">
    <location>
        <begin position="262"/>
        <end position="266"/>
    </location>
</feature>
<feature type="helix" evidence="15">
    <location>
        <begin position="268"/>
        <end position="278"/>
    </location>
</feature>
<feature type="helix" evidence="15">
    <location>
        <begin position="288"/>
        <end position="295"/>
    </location>
</feature>
<feature type="helix" evidence="15">
    <location>
        <begin position="299"/>
        <end position="318"/>
    </location>
</feature>
<feature type="turn" evidence="15">
    <location>
        <begin position="319"/>
        <end position="321"/>
    </location>
</feature>
<feature type="helix" evidence="15">
    <location>
        <begin position="324"/>
        <end position="326"/>
    </location>
</feature>